<sequence length="218" mass="25712">MPMILGYWDIRGLAHAIRLLLEYTDSSYEEKKYTMGDAPDYDRSQWLNEKFKLGLDFPNLPYLIDGAHKITQSNAILCYIARKHNLCGETEEEKIRVDILENQTMDNHMQLGMICYNPEFEKLKPKYLEELPEKLKLYSEFLGKRPWFAGNKITFVDFLVYDVLDLHRIFEPKCLDAFPNLKDFISRFEGLEKISAYMKSSRFLPRPVFSKMAVWGNK</sequence>
<name>GSTM1_HUMAN</name>
<keyword id="KW-0002">3D-structure</keyword>
<keyword id="KW-0025">Alternative splicing</keyword>
<keyword id="KW-0963">Cytoplasm</keyword>
<keyword id="KW-0903">Direct protein sequencing</keyword>
<keyword id="KW-0443">Lipid metabolism</keyword>
<keyword id="KW-0597">Phosphoprotein</keyword>
<keyword id="KW-1267">Proteomics identification</keyword>
<keyword id="KW-1185">Reference proteome</keyword>
<keyword id="KW-0808">Transferase</keyword>
<organism>
    <name type="scientific">Homo sapiens</name>
    <name type="common">Human</name>
    <dbReference type="NCBI Taxonomy" id="9606"/>
    <lineage>
        <taxon>Eukaryota</taxon>
        <taxon>Metazoa</taxon>
        <taxon>Chordata</taxon>
        <taxon>Craniata</taxon>
        <taxon>Vertebrata</taxon>
        <taxon>Euteleostomi</taxon>
        <taxon>Mammalia</taxon>
        <taxon>Eutheria</taxon>
        <taxon>Euarchontoglires</taxon>
        <taxon>Primates</taxon>
        <taxon>Haplorrhini</taxon>
        <taxon>Catarrhini</taxon>
        <taxon>Hominidae</taxon>
        <taxon>Homo</taxon>
    </lineage>
</organism>
<reference key="1">
    <citation type="journal article" date="1988" name="Nucleic Acids Res.">
        <title>The human liver glutathione S-transferase gene superfamily: expression and chromosome mapping of an Hb subunit cDNA.</title>
        <authorList>
            <person name="Dejong J.L."/>
            <person name="Chang C.M."/>
            <person name="Whang Peng J."/>
            <person name="Knutsen T."/>
            <person name="Tu C.-P.D."/>
        </authorList>
    </citation>
    <scope>NUCLEOTIDE SEQUENCE [MRNA] (ISOFORM 1)</scope>
    <scope>VARIANT ASN-173</scope>
</reference>
<reference key="2">
    <citation type="journal article" date="1988" name="Proc. Natl. Acad. Sci. U.S.A.">
        <title>Hereditary differences in the expression of the human glutathione transferase active on trans-stilbene oxide are due to a gene deletion.</title>
        <authorList>
            <person name="Seidegaard J."/>
            <person name="Vorachek W.R."/>
            <person name="Pero R.W."/>
            <person name="Pearson W.R."/>
        </authorList>
    </citation>
    <scope>NUCLEOTIDE SEQUENCE [MRNA] (ISOFORM 1)</scope>
</reference>
<reference key="3">
    <citation type="submission" date="2003-12" db="EMBL/GenBank/DDBJ databases">
        <authorList>
            <person name="Chen P."/>
            <person name="Wu Y."/>
            <person name="Zhang C."/>
            <person name="Han L."/>
            <person name="Wu Y."/>
            <person name="Xie D."/>
            <person name="Chen L."/>
        </authorList>
    </citation>
    <scope>NUCLEOTIDE SEQUENCE [MRNA] (ISOFORM 1)</scope>
    <scope>VARIANT ASN-173</scope>
    <source>
        <tissue>Liver</tissue>
    </source>
</reference>
<reference key="4">
    <citation type="submission" date="2004-01" db="EMBL/GenBank/DDBJ databases">
        <authorList>
            <person name="Chen P."/>
            <person name="Zhang C."/>
            <person name="Xie D."/>
            <person name="Wu Y."/>
            <person name="Han L."/>
            <person name="Chen L."/>
        </authorList>
    </citation>
    <scope>NUCLEOTIDE SEQUENCE [MRNA] (ISOFORMS 1 AND 2)</scope>
    <source>
        <tissue>Liver</tissue>
    </source>
</reference>
<reference key="5">
    <citation type="submission" date="2004-06" db="EMBL/GenBank/DDBJ databases">
        <title>Cloning of human full open reading frames in Gateway(TM) system entry vector (pDONR201).</title>
        <authorList>
            <person name="Halleck A."/>
            <person name="Ebert L."/>
            <person name="Mkoundinya M."/>
            <person name="Schick M."/>
            <person name="Eisenstein S."/>
            <person name="Neubert P."/>
            <person name="Kstrang K."/>
            <person name="Schatten R."/>
            <person name="Shen B."/>
            <person name="Henze S."/>
            <person name="Mar W."/>
            <person name="Korn B."/>
            <person name="Zuo D."/>
            <person name="Hu Y."/>
            <person name="LaBaer J."/>
        </authorList>
    </citation>
    <scope>NUCLEOTIDE SEQUENCE [LARGE SCALE MRNA] (ISOFORM 1)</scope>
    <scope>VARIANT ASN-173</scope>
</reference>
<reference key="6">
    <citation type="journal article" date="2004" name="Genome Res.">
        <title>The status, quality, and expansion of the NIH full-length cDNA project: the Mammalian Gene Collection (MGC).</title>
        <authorList>
            <consortium name="The MGC Project Team"/>
        </authorList>
    </citation>
    <scope>NUCLEOTIDE SEQUENCE [LARGE SCALE MRNA] (ISOFORM 2)</scope>
    <source>
        <tissue>Testis</tissue>
    </source>
</reference>
<reference key="7">
    <citation type="journal article" date="1993" name="Biochem. J.">
        <title>Deduced amino acid sequence, gene structure and chromosomal location of a novel human class Mu glutathione S-transferase, GSTM4.</title>
        <authorList>
            <person name="Zhong S."/>
            <person name="Spurr N.K."/>
            <person name="Hayes J.D."/>
            <person name="Wolf C.R."/>
        </authorList>
    </citation>
    <scope>NUCLEOTIDE SEQUENCE [GENOMIC DNA] OF 1-189 (ISOFORM 1)</scope>
    <scope>VARIANT ASN-173</scope>
</reference>
<reference key="8">
    <citation type="journal article" date="1994" name="J. Biochem.">
        <title>Immunochemical evidence for the occurrence of Mu class glutathione S-transferase in human fetal livers.</title>
        <authorList>
            <person name="Mera N."/>
            <person name="Ohmori S."/>
            <person name="Itahashi K."/>
            <person name="Kiuchi M."/>
            <person name="Igarashi T."/>
            <person name="Rikihisa T."/>
            <person name="Kitada M."/>
        </authorList>
    </citation>
    <scope>PROTEIN SEQUENCE OF 2-31</scope>
    <scope>TISSUE SPECIFICITY</scope>
    <source>
        <tissue>Fetal liver</tissue>
    </source>
</reference>
<reference key="9">
    <citation type="journal article" date="1990" name="J. Biol. Chem.">
        <title>Purification and characterization of glutathione transferases with an activity toward nitroglycerin from human aorta and heart. Multiplicity of the human class Mu forms.</title>
        <authorList>
            <person name="Tsuchida S."/>
            <person name="Maki T."/>
            <person name="Sato K."/>
        </authorList>
    </citation>
    <scope>PROTEIN SEQUENCE OF 2-25</scope>
    <source>
        <tissue>Aorta</tissue>
        <tissue>Heart</tissue>
    </source>
</reference>
<reference key="10">
    <citation type="journal article" date="1985" name="FEBS Lett.">
        <title>Structural evidence for three different types of glutathione transferase in human tissues.</title>
        <authorList>
            <person name="Alin P."/>
            <person name="Mannervik B."/>
            <person name="Joernvall H."/>
        </authorList>
    </citation>
    <scope>PROTEIN SEQUENCE OF 2-24</scope>
</reference>
<reference key="11">
    <citation type="journal article" date="1985" name="Proc. Natl. Acad. Sci. U.S.A.">
        <title>Identification of three classes of cytosolic glutathione transferase common to several mammalian species: correlation between structural data and enzymatic properties.</title>
        <authorList>
            <person name="Mannervik B."/>
            <person name="Alin P."/>
            <person name="Guthenberg C."/>
            <person name="Jensson H."/>
            <person name="Tahir M.K."/>
            <person name="Warholm M."/>
            <person name="Joernvall H."/>
        </authorList>
    </citation>
    <scope>PROTEIN SEQUENCE OF 2-24</scope>
</reference>
<reference key="12">
    <citation type="journal article" date="1991" name="Arch. Biochem. Biophys.">
        <title>Purification and characterization of human muscle glutathione S-transferases: evidence that glutathione S-transferase zeta corresponds to a locus distinct from GST1, GST2, and GST3.</title>
        <authorList>
            <person name="Singhal S.S."/>
            <person name="Ahmad H."/>
            <person name="Sharma R."/>
            <person name="Gupta S."/>
            <person name="Haque A.K."/>
            <person name="Awasthi Y.C."/>
        </authorList>
    </citation>
    <scope>PROTEIN SEQUENCE OF 2-15</scope>
</reference>
<reference key="13">
    <citation type="journal article" date="1992" name="Biochim. Biophys. Acta">
        <title>Gender related differences in the expression and characteristics of glutathione S-transferases of human colon.</title>
        <authorList>
            <person name="Singhal S.S."/>
            <person name="Saxena M."/>
            <person name="Awasthi S."/>
            <person name="Ahmad H."/>
            <person name="Sharma R."/>
            <person name="Awasthi Y.C."/>
        </authorList>
    </citation>
    <scope>PROTEIN SEQUENCE OF 2-13</scope>
    <source>
        <tissue>Colon</tissue>
    </source>
</reference>
<reference key="14">
    <citation type="journal article" date="2000" name="Electrophoresis">
        <title>Human ERp29: isolation, primary structural characterisation and two-dimensional gel mapping.</title>
        <authorList>
            <person name="Hubbard M.J."/>
            <person name="McHugh N.J."/>
        </authorList>
    </citation>
    <scope>PROTEIN SEQUENCE OF 53-60</scope>
    <scope>IDENTIFICATION BY MASS SPECTROMETRY</scope>
    <source>
        <tissue>Liver</tissue>
    </source>
</reference>
<reference key="15">
    <citation type="journal article" date="1990" name="Nucleic Acids Res.">
        <title>GST1 gene deletion determined by polymerase chain reaction.</title>
        <authorList>
            <person name="Comstock K.E."/>
            <person name="Sanderson B.J.S."/>
            <person name="Claflin G."/>
            <person name="Henner W.D."/>
        </authorList>
    </citation>
    <scope>NUCLEOTIDE SEQUENCE [GENOMIC DNA] OF 60-118</scope>
</reference>
<reference key="16">
    <citation type="journal article" date="1993" name="Am. J. Hum. Genet.">
        <title>Identification of class-mu glutathione transferase genes GSTM1-GSTM5 on human chromosome 1p13.</title>
        <authorList>
            <person name="Pearson W.R."/>
            <person name="Vorachek W.R."/>
            <person name="Xu S.J."/>
            <person name="Berger R."/>
            <person name="Hart I."/>
            <person name="Vannais D."/>
            <person name="Patterson D."/>
        </authorList>
    </citation>
    <scope>NUCLEOTIDE SEQUENCE [MRNA] OF 125-186</scope>
</reference>
<reference key="17">
    <citation type="journal article" date="1997" name="Chem. Res. Toxicol.">
        <title>Stereoselective conjugation of prostaglandin A2 and prostaglandin J2 with glutathione, catalyzed by the human glutathione S-transferases A1-1, A2-2, M1a-1a, and P1-1.</title>
        <authorList>
            <person name="Bogaards J.J."/>
            <person name="Venekamp J.C."/>
            <person name="van Bladeren P.J."/>
        </authorList>
    </citation>
    <scope>CATALYTIC ACTIVITY</scope>
    <scope>FUNCTION</scope>
    <scope>BIOPHYSICOCHEMICAL PROPERTIES</scope>
</reference>
<reference key="18">
    <citation type="journal article" date="2011" name="Lipids">
        <title>Biosynthesis of 14,15-hepoxilins in human l1236 Hodgkin lymphoma cells and eosinophils.</title>
        <authorList>
            <person name="Brunnstroem A."/>
            <person name="Hamberg M."/>
            <person name="Griffiths W.J."/>
            <person name="Mannervik B."/>
            <person name="Claesson H.E."/>
        </authorList>
    </citation>
    <scope>CATALYTIC ACTIVITY</scope>
    <scope>FUNCTION</scope>
</reference>
<reference key="19">
    <citation type="journal article" date="1999" name="Biochemistry">
        <title>Functions of His107 in the catalytic mechanism of human glutathione S-transferase hGSTM1a-1a.</title>
        <authorList>
            <person name="Patskovsky Y.V."/>
            <person name="Patskovska L.N."/>
            <person name="Listowsky I."/>
        </authorList>
    </citation>
    <scope>X-RAY CRYSTALLOGRAPHY (2.68 ANGSTROMS)</scope>
    <scope>MUTAGENESIS OF HIS-108</scope>
</reference>
<reference evidence="25" key="20">
    <citation type="submission" date="2005-01" db="PDB data bank">
        <title>Human glutathione S-transferase M1A-1A catalyzes formation of Gsh-metal complexes.</title>
        <authorList>
            <person name="Patskovsky Y.V."/>
            <person name="Patskovska L.N."/>
            <person name="Listowsky I."/>
            <person name="Almo S.C."/>
        </authorList>
    </citation>
    <scope>X-RAY CRYSTALLOGRAPHY (2.50 ANGSTROMS) IN COMPLEX WITH GLUTATHIONE</scope>
</reference>
<reference key="21">
    <citation type="journal article" date="2006" name="Biochemistry">
        <title>Transition state model and mechanism of nucleophilic aromatic substitution reactions catalyzed by human glutathione S-transferase M1a-1a.</title>
        <authorList>
            <person name="Patskovsky Y."/>
            <person name="Patskovska L."/>
            <person name="Almo S.C."/>
            <person name="Listowsky I."/>
        </authorList>
    </citation>
    <scope>X-RAY CRYSTALLOGRAPHY (1.9 ANGSTROMS) IN COMPLEXES WITH GLUTAHIONE ANALOGS</scope>
    <scope>CATALYTIC ACTIVITY</scope>
    <scope>FUNCTION</scope>
    <scope>MUTAGENESIS OF TYR-7; HIS-108; MET-109 AND TYR-116</scope>
</reference>
<proteinExistence type="evidence at protein level"/>
<evidence type="ECO:0000250" key="1">
    <source>
        <dbReference type="UniProtKB" id="P04905"/>
    </source>
</evidence>
<evidence type="ECO:0000250" key="2">
    <source>
        <dbReference type="UniProtKB" id="P10649"/>
    </source>
</evidence>
<evidence type="ECO:0000269" key="3">
    <source>
    </source>
</evidence>
<evidence type="ECO:0000269" key="4">
    <source>
    </source>
</evidence>
<evidence type="ECO:0000269" key="5">
    <source>
    </source>
</evidence>
<evidence type="ECO:0000269" key="6">
    <source>
    </source>
</evidence>
<evidence type="ECO:0000269" key="7">
    <source>
    </source>
</evidence>
<evidence type="ECO:0000269" key="8">
    <source>
    </source>
</evidence>
<evidence type="ECO:0000269" key="9">
    <source>
    </source>
</evidence>
<evidence type="ECO:0000269" key="10">
    <source>
    </source>
</evidence>
<evidence type="ECO:0000269" key="11">
    <source>
    </source>
</evidence>
<evidence type="ECO:0000269" key="12">
    <source>
    </source>
</evidence>
<evidence type="ECO:0000269" key="13">
    <source>
    </source>
</evidence>
<evidence type="ECO:0000269" key="14">
    <source>
    </source>
</evidence>
<evidence type="ECO:0000269" key="15">
    <source ref="20"/>
</evidence>
<evidence type="ECO:0000269" key="16">
    <source ref="3"/>
</evidence>
<evidence type="ECO:0000269" key="17">
    <source ref="5"/>
</evidence>
<evidence type="ECO:0000303" key="18">
    <source>
    </source>
</evidence>
<evidence type="ECO:0000303" key="19">
    <source ref="4"/>
</evidence>
<evidence type="ECO:0000305" key="20"/>
<evidence type="ECO:0000305" key="21">
    <source>
    </source>
</evidence>
<evidence type="ECO:0000305" key="22">
    <source>
    </source>
</evidence>
<evidence type="ECO:0000305" key="23">
    <source>
    </source>
</evidence>
<evidence type="ECO:0000312" key="24">
    <source>
        <dbReference type="HGNC" id="HGNC:4632"/>
    </source>
</evidence>
<evidence type="ECO:0007744" key="25">
    <source>
        <dbReference type="PDB" id="1YJ6"/>
    </source>
</evidence>
<evidence type="ECO:0007829" key="26">
    <source>
        <dbReference type="PDB" id="1XW6"/>
    </source>
</evidence>
<evidence type="ECO:0007829" key="27">
    <source>
        <dbReference type="PDB" id="7BEU"/>
    </source>
</evidence>
<gene>
    <name evidence="24" type="primary">GSTM1</name>
    <name type="synonym">GST1</name>
</gene>
<feature type="initiator methionine" description="Removed" evidence="3 5 7 9 10 11">
    <location>
        <position position="1"/>
    </location>
</feature>
<feature type="chain" id="PRO_0000185816" description="Glutathione S-transferase Mu 1">
    <location>
        <begin position="2"/>
        <end position="218"/>
    </location>
</feature>
<feature type="domain" description="GST N-terminal">
    <location>
        <begin position="2"/>
        <end position="88"/>
    </location>
</feature>
<feature type="domain" description="GST C-terminal">
    <location>
        <begin position="90"/>
        <end position="208"/>
    </location>
</feature>
<feature type="binding site" evidence="15 21">
    <location>
        <begin position="7"/>
        <end position="8"/>
    </location>
    <ligand>
        <name>glutathione</name>
        <dbReference type="ChEBI" id="CHEBI:57925"/>
    </ligand>
</feature>
<feature type="binding site" evidence="15 21">
    <location>
        <begin position="43"/>
        <end position="46"/>
    </location>
    <ligand>
        <name>glutathione</name>
        <dbReference type="ChEBI" id="CHEBI:57925"/>
    </ligand>
</feature>
<feature type="binding site" evidence="15 21">
    <location>
        <position position="50"/>
    </location>
    <ligand>
        <name>glutathione</name>
        <dbReference type="ChEBI" id="CHEBI:57925"/>
    </ligand>
</feature>
<feature type="binding site" evidence="15 21">
    <location>
        <begin position="59"/>
        <end position="60"/>
    </location>
    <ligand>
        <name>glutathione</name>
        <dbReference type="ChEBI" id="CHEBI:57925"/>
    </ligand>
</feature>
<feature type="binding site" evidence="15 21">
    <location>
        <begin position="72"/>
        <end position="73"/>
    </location>
    <ligand>
        <name>glutathione</name>
        <dbReference type="ChEBI" id="CHEBI:57925"/>
    </ligand>
</feature>
<feature type="binding site">
    <location>
        <position position="116"/>
    </location>
    <ligand>
        <name>substrate</name>
    </ligand>
</feature>
<feature type="modified residue" description="Phosphothreonine" evidence="2">
    <location>
        <position position="34"/>
    </location>
</feature>
<feature type="modified residue" description="Phosphoserine" evidence="1">
    <location>
        <position position="210"/>
    </location>
</feature>
<feature type="splice variant" id="VSP_036618" description="In isoform 2." evidence="18 19">
    <location>
        <begin position="153"/>
        <end position="189"/>
    </location>
</feature>
<feature type="sequence variant" id="VAR_003617" description="In allele GSTM1B; dbSNP:rs1065411." evidence="8 12 16 17">
    <original>K</original>
    <variation>N</variation>
    <location>
        <position position="173"/>
    </location>
</feature>
<feature type="sequence variant" id="VAR_014497" description="In dbSNP:rs449856.">
    <original>S</original>
    <variation>T</variation>
    <location>
        <position position="210"/>
    </location>
</feature>
<feature type="mutagenesis site" description="Reduces catalytic activity 100-fold." evidence="4">
    <original>Y</original>
    <variation>F</variation>
    <location>
        <position position="7"/>
    </location>
</feature>
<feature type="mutagenesis site" description="Reduces catalytic activity by half." evidence="4 14">
    <original>H</original>
    <variation>Q</variation>
    <location>
        <position position="108"/>
    </location>
</feature>
<feature type="mutagenesis site" description="Changes the properties of the enzyme toward some substrates." evidence="4 14">
    <original>H</original>
    <variation>S</variation>
    <location>
        <position position="108"/>
    </location>
</feature>
<feature type="mutagenesis site" description="Reduces catalytic activity by half." evidence="4">
    <original>M</original>
    <variation>I</variation>
    <location>
        <position position="109"/>
    </location>
</feature>
<feature type="mutagenesis site" description="Reduces catalytic activity 10-fold." evidence="4">
    <original>Y</original>
    <variation>A</variation>
    <location>
        <position position="116"/>
    </location>
</feature>
<feature type="mutagenesis site" description="Slight increase of catalytic activity." evidence="4">
    <original>Y</original>
    <variation>F</variation>
    <location>
        <position position="116"/>
    </location>
</feature>
<feature type="sequence conflict" description="In Ref. 7; CAA48636." evidence="20" ref="7">
    <original>S</original>
    <variation>T</variation>
    <location>
        <position position="44"/>
    </location>
</feature>
<feature type="sequence conflict" description="In Ref. 4; AAT06767." evidence="20" ref="4">
    <original>P</original>
    <variation>T</variation>
    <location>
        <position position="207"/>
    </location>
</feature>
<feature type="strand" evidence="27">
    <location>
        <begin position="3"/>
        <end position="11"/>
    </location>
</feature>
<feature type="helix" evidence="27">
    <location>
        <begin position="12"/>
        <end position="14"/>
    </location>
</feature>
<feature type="helix" evidence="27">
    <location>
        <begin position="15"/>
        <end position="23"/>
    </location>
</feature>
<feature type="strand" evidence="27">
    <location>
        <begin position="28"/>
        <end position="33"/>
    </location>
</feature>
<feature type="turn" evidence="27">
    <location>
        <begin position="38"/>
        <end position="40"/>
    </location>
</feature>
<feature type="helix" evidence="27">
    <location>
        <begin position="44"/>
        <end position="47"/>
    </location>
</feature>
<feature type="turn" evidence="27">
    <location>
        <begin position="48"/>
        <end position="51"/>
    </location>
</feature>
<feature type="strand" evidence="27">
    <location>
        <begin position="60"/>
        <end position="65"/>
    </location>
</feature>
<feature type="strand" evidence="27">
    <location>
        <begin position="68"/>
        <end position="72"/>
    </location>
</feature>
<feature type="helix" evidence="27">
    <location>
        <begin position="73"/>
        <end position="83"/>
    </location>
</feature>
<feature type="helix" evidence="27">
    <location>
        <begin position="91"/>
        <end position="115"/>
    </location>
</feature>
<feature type="helix" evidence="27">
    <location>
        <begin position="120"/>
        <end position="142"/>
    </location>
</feature>
<feature type="strand" evidence="27">
    <location>
        <begin position="150"/>
        <end position="152"/>
    </location>
</feature>
<feature type="helix" evidence="27">
    <location>
        <begin position="155"/>
        <end position="170"/>
    </location>
</feature>
<feature type="turn" evidence="27">
    <location>
        <begin position="172"/>
        <end position="177"/>
    </location>
</feature>
<feature type="helix" evidence="27">
    <location>
        <begin position="179"/>
        <end position="189"/>
    </location>
</feature>
<feature type="helix" evidence="27">
    <location>
        <begin position="192"/>
        <end position="199"/>
    </location>
</feature>
<feature type="strand" evidence="26">
    <location>
        <begin position="200"/>
        <end position="202"/>
    </location>
</feature>
<feature type="strand" evidence="27">
    <location>
        <begin position="214"/>
        <end position="216"/>
    </location>
</feature>
<accession>P09488</accession>
<accession>Q5GHG0</accession>
<accession>Q6FH88</accession>
<accession>Q8TC98</accession>
<accession>Q9UC96</accession>
<comment type="function">
    <text evidence="4 6 13">Conjugation of reduced glutathione to a wide number of exogenous and endogenous hydrophobic electrophiles. Involved in the formation of glutathione conjugates of both prostaglandin A2 (PGA2) and prostaglandin J2 (PGJ2) (PubMed:9084911). Participates in the formation of novel hepoxilin regioisomers (PubMed:21046276).</text>
</comment>
<comment type="catalytic activity">
    <reaction evidence="4">
        <text>RX + glutathione = an S-substituted glutathione + a halide anion + H(+)</text>
        <dbReference type="Rhea" id="RHEA:16437"/>
        <dbReference type="ChEBI" id="CHEBI:15378"/>
        <dbReference type="ChEBI" id="CHEBI:16042"/>
        <dbReference type="ChEBI" id="CHEBI:17792"/>
        <dbReference type="ChEBI" id="CHEBI:57925"/>
        <dbReference type="ChEBI" id="CHEBI:90779"/>
        <dbReference type="EC" id="2.5.1.18"/>
    </reaction>
    <physiologicalReaction direction="left-to-right" evidence="20">
        <dbReference type="Rhea" id="RHEA:16438"/>
    </physiologicalReaction>
</comment>
<comment type="catalytic activity">
    <reaction evidence="13">
        <text>prostaglandin A2 + glutathione = prostaglandin A2-S-(R)-glutathione</text>
        <dbReference type="Rhea" id="RHEA:50796"/>
        <dbReference type="ChEBI" id="CHEBI:57925"/>
        <dbReference type="ChEBI" id="CHEBI:133370"/>
        <dbReference type="ChEBI" id="CHEBI:133768"/>
    </reaction>
    <physiologicalReaction direction="left-to-right" evidence="23">
        <dbReference type="Rhea" id="RHEA:50797"/>
    </physiologicalReaction>
</comment>
<comment type="catalytic activity">
    <reaction evidence="13">
        <text>prostaglandin J2 + glutathione = prostaglandin J2-S-(R)-glutathione</text>
        <dbReference type="Rhea" id="RHEA:50804"/>
        <dbReference type="ChEBI" id="CHEBI:57925"/>
        <dbReference type="ChEBI" id="CHEBI:133396"/>
        <dbReference type="ChEBI" id="CHEBI:133771"/>
    </reaction>
    <physiologicalReaction direction="left-to-right" evidence="23">
        <dbReference type="Rhea" id="RHEA:50805"/>
    </physiologicalReaction>
</comment>
<comment type="catalytic activity">
    <reaction evidence="13">
        <text>prostaglandin J2 + glutathione = prostaglandin J2-S-(S)-glutathione</text>
        <dbReference type="Rhea" id="RHEA:50808"/>
        <dbReference type="ChEBI" id="CHEBI:57925"/>
        <dbReference type="ChEBI" id="CHEBI:133396"/>
        <dbReference type="ChEBI" id="CHEBI:133772"/>
    </reaction>
    <physiologicalReaction direction="left-to-right" evidence="23">
        <dbReference type="Rhea" id="RHEA:50809"/>
    </physiologicalReaction>
</comment>
<comment type="catalytic activity">
    <reaction evidence="13">
        <text>prostaglandin A2 + glutathione = prostaglandin A2-S-(S)-glutathione</text>
        <dbReference type="Rhea" id="RHEA:50800"/>
        <dbReference type="ChEBI" id="CHEBI:57925"/>
        <dbReference type="ChEBI" id="CHEBI:133370"/>
        <dbReference type="ChEBI" id="CHEBI:133769"/>
    </reaction>
    <physiologicalReaction direction="left-to-right" evidence="23">
        <dbReference type="Rhea" id="RHEA:50801"/>
    </physiologicalReaction>
</comment>
<comment type="catalytic activity">
    <reaction evidence="6">
        <text>11(S)-hydroxy-14(S),15(S)-epoxy-(5Z,8Z,12E)-eicosatrienoate + glutathione = (11S,15S)-dihydroxy-14(R)-S-glutathionyl-(5Z,8Z,12E)-eicosatrienoate</text>
        <dbReference type="Rhea" id="RHEA:50260"/>
        <dbReference type="ChEBI" id="CHEBI:57925"/>
        <dbReference type="ChEBI" id="CHEBI:132200"/>
        <dbReference type="ChEBI" id="CHEBI:132201"/>
    </reaction>
    <physiologicalReaction direction="left-to-right" evidence="22">
        <dbReference type="Rhea" id="RHEA:50261"/>
    </physiologicalReaction>
</comment>
<comment type="biophysicochemical properties">
    <kinetics>
        <KM evidence="13">26 uM for prostaglandin A2 (at pH 7.0 and 37 degrees Celsius)</KM>
        <KM evidence="13">95 uM for prostaglandin J2 (at pH 7.0 and 37 degrees Celsius)</KM>
        <Vmax evidence="13">27.0 nmol/min/mg enzyme for the formation of the glutathione-S-conjugate of prostaglandin A2 (at pH 7.0 and 37 degrees Celsius)</Vmax>
        <Vmax evidence="13">72.0 nmol/min/mg enzyme for the formation of the glutathione-S-conjugate of prostaglandin J2 (at pH 7.0 and 37 degrees Celsius)</Vmax>
    </kinetics>
</comment>
<comment type="subunit">
    <text>Homodimer.</text>
</comment>
<comment type="subcellular location">
    <subcellularLocation>
        <location>Cytoplasm</location>
    </subcellularLocation>
</comment>
<comment type="alternative products">
    <event type="alternative splicing"/>
    <isoform>
        <id>P09488-1</id>
        <name>1</name>
        <sequence type="displayed"/>
    </isoform>
    <isoform>
        <id>P09488-2</id>
        <name>2</name>
        <sequence type="described" ref="VSP_036618"/>
    </isoform>
</comment>
<comment type="tissue specificity">
    <text evidence="11">Liver (at protein level).</text>
</comment>
<comment type="polymorphism">
    <text evidence="8 12 16 17">There are two alleles; GSTM1A and GSTM1B which differ in position 173. The sequence shown is that of allele GSTM1A.</text>
</comment>
<comment type="similarity">
    <text evidence="20">Belongs to the GST superfamily. Mu family.</text>
</comment>
<protein>
    <recommendedName>
        <fullName evidence="20">Glutathione S-transferase Mu 1</fullName>
        <ecNumber evidence="4">2.5.1.18</ecNumber>
    </recommendedName>
    <alternativeName>
        <fullName>GST HB subunit 4</fullName>
    </alternativeName>
    <alternativeName>
        <fullName>GST class-mu 1</fullName>
    </alternativeName>
    <alternativeName>
        <fullName>GSTM1-1</fullName>
    </alternativeName>
    <alternativeName>
        <fullName>GSTM1a-1a</fullName>
    </alternativeName>
    <alternativeName>
        <fullName>GSTM1b-1b</fullName>
    </alternativeName>
    <alternativeName>
        <fullName>GTH4</fullName>
    </alternativeName>
</protein>
<dbReference type="EC" id="2.5.1.18" evidence="4"/>
<dbReference type="EMBL" id="X08020">
    <property type="protein sequence ID" value="CAA30821.1"/>
    <property type="molecule type" value="mRNA"/>
</dbReference>
<dbReference type="EMBL" id="J03817">
    <property type="protein sequence ID" value="AAA59203.1"/>
    <property type="molecule type" value="mRNA"/>
</dbReference>
<dbReference type="EMBL" id="AY510272">
    <property type="protein sequence ID" value="AAR85979.1"/>
    <property type="molecule type" value="mRNA"/>
</dbReference>
<dbReference type="EMBL" id="AY532926">
    <property type="protein sequence ID" value="AAT06767.1"/>
    <property type="molecule type" value="mRNA"/>
</dbReference>
<dbReference type="EMBL" id="AY532927">
    <property type="protein sequence ID" value="AAT06768.1"/>
    <property type="molecule type" value="mRNA"/>
</dbReference>
<dbReference type="EMBL" id="CR541868">
    <property type="protein sequence ID" value="CAG46666.1"/>
    <property type="molecule type" value="mRNA"/>
</dbReference>
<dbReference type="EMBL" id="BC024005">
    <property type="protein sequence ID" value="AAH24005.1"/>
    <property type="molecule type" value="mRNA"/>
</dbReference>
<dbReference type="EMBL" id="X68676">
    <property type="protein sequence ID" value="CAA48636.1"/>
    <property type="molecule type" value="Genomic_DNA"/>
</dbReference>
<dbReference type="EMBL" id="X51451">
    <property type="protein sequence ID" value="CAA35817.1"/>
    <property type="molecule type" value="Genomic_DNA"/>
</dbReference>
<dbReference type="CCDS" id="CCDS809.1">
    <molecule id="P09488-1"/>
</dbReference>
<dbReference type="CCDS" id="CCDS810.1">
    <molecule id="P09488-2"/>
</dbReference>
<dbReference type="PIR" id="S01719">
    <property type="entry name" value="S01719"/>
</dbReference>
<dbReference type="RefSeq" id="NP_000552.2">
    <molecule id="P09488-1"/>
    <property type="nucleotide sequence ID" value="NM_000561.3"/>
</dbReference>
<dbReference type="RefSeq" id="NP_666533.1">
    <molecule id="P09488-2"/>
    <property type="nucleotide sequence ID" value="NM_146421.3"/>
</dbReference>
<dbReference type="PDB" id="1GTU">
    <property type="method" value="X-ray"/>
    <property type="resolution" value="2.68 A"/>
    <property type="chains" value="A/B/C/D=2-218"/>
</dbReference>
<dbReference type="PDB" id="1XW6">
    <property type="method" value="X-ray"/>
    <property type="resolution" value="1.90 A"/>
    <property type="chains" value="A/B/C/D=1-218"/>
</dbReference>
<dbReference type="PDB" id="1XWK">
    <property type="method" value="X-ray"/>
    <property type="resolution" value="2.30 A"/>
    <property type="chains" value="A/B/C=1-218"/>
</dbReference>
<dbReference type="PDB" id="1YJ6">
    <property type="method" value="X-ray"/>
    <property type="resolution" value="2.50 A"/>
    <property type="chains" value="A/B/C=1-218"/>
</dbReference>
<dbReference type="PDB" id="2F3M">
    <property type="method" value="X-ray"/>
    <property type="resolution" value="2.70 A"/>
    <property type="chains" value="A/B/C/D/E/F=1-218"/>
</dbReference>
<dbReference type="PDB" id="7BEU">
    <property type="method" value="X-ray"/>
    <property type="resolution" value="1.59 A"/>
    <property type="chains" value="A/B/C/D=1-218"/>
</dbReference>
<dbReference type="PDB" id="8VOU">
    <property type="method" value="X-ray"/>
    <property type="resolution" value="2.55 A"/>
    <property type="chains" value="A/B/C/D=1-218"/>
</dbReference>
<dbReference type="PDBsum" id="1GTU"/>
<dbReference type="PDBsum" id="1XW6"/>
<dbReference type="PDBsum" id="1XWK"/>
<dbReference type="PDBsum" id="1YJ6"/>
<dbReference type="PDBsum" id="2F3M"/>
<dbReference type="PDBsum" id="7BEU"/>
<dbReference type="PDBsum" id="8VOU"/>
<dbReference type="SMR" id="P09488"/>
<dbReference type="BioGRID" id="109199">
    <property type="interactions" value="17"/>
</dbReference>
<dbReference type="FunCoup" id="P09488">
    <property type="interactions" value="224"/>
</dbReference>
<dbReference type="IntAct" id="P09488">
    <property type="interactions" value="16"/>
</dbReference>
<dbReference type="STRING" id="9606.ENSP00000311469"/>
<dbReference type="BindingDB" id="P09488"/>
<dbReference type="ChEMBL" id="CHEMBL2081"/>
<dbReference type="DrugBank" id="DB01834">
    <property type="generic name" value="(9R,10R)-9-(S-glutathionyl)-10-hydroxy-9,10-dihydrophenanthrene"/>
</dbReference>
<dbReference type="DrugBank" id="DB04187">
    <property type="generic name" value="(9S,10S)-9-(S-glutathionyl)-10-hydroxy-9,10-dihydrophenanthrene"/>
</dbReference>
<dbReference type="DrugBank" id="DB03314">
    <property type="generic name" value="5-fluorotryptophan"/>
</dbReference>
<dbReference type="DrugBank" id="DB00316">
    <property type="generic name" value="Acetaminophen"/>
</dbReference>
<dbReference type="DrugBank" id="DB00321">
    <property type="generic name" value="Amitriptyline"/>
</dbReference>
<dbReference type="DrugBank" id="DB00993">
    <property type="generic name" value="Azathioprine"/>
</dbReference>
<dbReference type="DrugBank" id="DB01008">
    <property type="generic name" value="Busulfan"/>
</dbReference>
<dbReference type="DrugBank" id="DB00958">
    <property type="generic name" value="Carboplatin"/>
</dbReference>
<dbReference type="DrugBank" id="DB00291">
    <property type="generic name" value="Chlorambucil"/>
</dbReference>
<dbReference type="DrugBank" id="DB00608">
    <property type="generic name" value="Chloroquine"/>
</dbReference>
<dbReference type="DrugBank" id="DB00515">
    <property type="generic name" value="Cisplatin"/>
</dbReference>
<dbReference type="DrugBank" id="DB11672">
    <property type="generic name" value="Curcumin"/>
</dbReference>
<dbReference type="DrugBank" id="DB03619">
    <property type="generic name" value="Deoxycholic acid"/>
</dbReference>
<dbReference type="DrugBank" id="DB00143">
    <property type="generic name" value="Glutathione"/>
</dbReference>
<dbReference type="DrugBank" id="DB03310">
    <property type="generic name" value="Glutathione disulfide"/>
</dbReference>
<dbReference type="DrugBank" id="DB01020">
    <property type="generic name" value="Isosorbide mononitrate"/>
</dbReference>
<dbReference type="DrugBank" id="DB16216">
    <property type="generic name" value="Lazertinib"/>
</dbReference>
<dbReference type="DrugBank" id="DB00526">
    <property type="generic name" value="Oxaliplatin"/>
</dbReference>
<dbReference type="DrugBank" id="DB14924">
    <property type="generic name" value="Ritlecitinib"/>
</dbReference>
<dbReference type="DrugBank" id="DB02458">
    <property type="generic name" value="S-(2,4-dinitrophenyl)glutathione"/>
</dbReference>
<dbReference type="DrugBank" id="DB02165">
    <property type="generic name" value="Zinc trihydroxide"/>
</dbReference>
<dbReference type="SwissLipids" id="SLP:000001613"/>
<dbReference type="iPTMnet" id="P09488"/>
<dbReference type="MetOSite" id="P09488"/>
<dbReference type="PhosphoSitePlus" id="P09488"/>
<dbReference type="BioMuta" id="GSTM1"/>
<dbReference type="DMDM" id="121735"/>
<dbReference type="jPOST" id="P09488"/>
<dbReference type="MassIVE" id="P09488"/>
<dbReference type="PaxDb" id="9606-ENSP00000311469"/>
<dbReference type="PeptideAtlas" id="P09488"/>
<dbReference type="ProteomicsDB" id="52227">
    <molecule id="P09488-1"/>
</dbReference>
<dbReference type="ProteomicsDB" id="52228">
    <molecule id="P09488-2"/>
</dbReference>
<dbReference type="Pumba" id="P09488"/>
<dbReference type="Antibodypedia" id="20073">
    <property type="antibodies" value="673 antibodies from 42 providers"/>
</dbReference>
<dbReference type="CPTC" id="P09488">
    <property type="antibodies" value="7 antibodies"/>
</dbReference>
<dbReference type="DNASU" id="2944"/>
<dbReference type="Ensembl" id="ENST00000309851.10">
    <molecule id="P09488-1"/>
    <property type="protein sequence ID" value="ENSP00000311469.5"/>
    <property type="gene ID" value="ENSG00000134184.13"/>
</dbReference>
<dbReference type="Ensembl" id="ENST00000349334.7">
    <molecule id="P09488-2"/>
    <property type="protein sequence ID" value="ENSP00000234981.4"/>
    <property type="gene ID" value="ENSG00000134184.13"/>
</dbReference>
<dbReference type="GeneID" id="2944"/>
<dbReference type="KEGG" id="hsa:2944"/>
<dbReference type="MANE-Select" id="ENST00000309851.10">
    <property type="protein sequence ID" value="ENSP00000311469.5"/>
    <property type="RefSeq nucleotide sequence ID" value="NM_000561.4"/>
    <property type="RefSeq protein sequence ID" value="NP_000552.2"/>
</dbReference>
<dbReference type="AGR" id="HGNC:4632"/>
<dbReference type="CTD" id="2944"/>
<dbReference type="DisGeNET" id="2944"/>
<dbReference type="GeneCards" id="GSTM1"/>
<dbReference type="HGNC" id="HGNC:4632">
    <property type="gene designation" value="GSTM1"/>
</dbReference>
<dbReference type="HPA" id="ENSG00000134184">
    <property type="expression patterns" value="Tissue enhanced (liver)"/>
</dbReference>
<dbReference type="MIM" id="138350">
    <property type="type" value="gene"/>
</dbReference>
<dbReference type="neXtProt" id="NX_P09488"/>
<dbReference type="OpenTargets" id="ENSG00000134184"/>
<dbReference type="PharmGKB" id="PA182"/>
<dbReference type="VEuPathDB" id="HostDB:ENSG00000134184"/>
<dbReference type="eggNOG" id="KOG1695">
    <property type="taxonomic scope" value="Eukaryota"/>
</dbReference>
<dbReference type="GeneTree" id="ENSGT00940000160258"/>
<dbReference type="InParanoid" id="P09488"/>
<dbReference type="OMA" id="SIDPHAN"/>
<dbReference type="OrthoDB" id="4951845at2759"/>
<dbReference type="PAN-GO" id="P09488">
    <property type="GO annotations" value="2 GO annotations based on evolutionary models"/>
</dbReference>
<dbReference type="PhylomeDB" id="P09488"/>
<dbReference type="TreeFam" id="TF353040"/>
<dbReference type="BRENDA" id="2.5.1.18">
    <property type="organism ID" value="2681"/>
</dbReference>
<dbReference type="PathwayCommons" id="P09488"/>
<dbReference type="Reactome" id="R-HSA-156590">
    <property type="pathway name" value="Glutathione conjugation"/>
</dbReference>
<dbReference type="Reactome" id="R-HSA-9748787">
    <property type="pathway name" value="Azathioprine ADME"/>
</dbReference>
<dbReference type="Reactome" id="R-HSA-9753281">
    <property type="pathway name" value="Paracetamol ADME"/>
</dbReference>
<dbReference type="SABIO-RK" id="P09488"/>
<dbReference type="SignaLink" id="P09488"/>
<dbReference type="SIGNOR" id="P09488"/>
<dbReference type="BioGRID-ORCS" id="2944">
    <property type="hits" value="15 hits in 1058 CRISPR screens"/>
</dbReference>
<dbReference type="ChiTaRS" id="GSTM1">
    <property type="organism name" value="human"/>
</dbReference>
<dbReference type="EvolutionaryTrace" id="P09488"/>
<dbReference type="GeneWiki" id="Glutathione_S-transferase_Mu_1"/>
<dbReference type="GenomeRNAi" id="2944"/>
<dbReference type="Pharos" id="P09488">
    <property type="development level" value="Tbio"/>
</dbReference>
<dbReference type="PRO" id="PR:P09488"/>
<dbReference type="Proteomes" id="UP000005640">
    <property type="component" value="Chromosome 1"/>
</dbReference>
<dbReference type="RNAct" id="P09488">
    <property type="molecule type" value="protein"/>
</dbReference>
<dbReference type="Bgee" id="ENSG00000134184">
    <property type="expression patterns" value="Expressed in smooth muscle tissue and 97 other cell types or tissues"/>
</dbReference>
<dbReference type="ExpressionAtlas" id="P09488">
    <property type="expression patterns" value="baseline and differential"/>
</dbReference>
<dbReference type="GO" id="GO:0005737">
    <property type="term" value="C:cytoplasm"/>
    <property type="evidence" value="ECO:0000314"/>
    <property type="project" value="BHF-UCL"/>
</dbReference>
<dbReference type="GO" id="GO:0005829">
    <property type="term" value="C:cytosol"/>
    <property type="evidence" value="ECO:0000314"/>
    <property type="project" value="HPA"/>
</dbReference>
<dbReference type="GO" id="GO:0045171">
    <property type="term" value="C:intercellular bridge"/>
    <property type="evidence" value="ECO:0007669"/>
    <property type="project" value="UniProtKB-ARBA"/>
</dbReference>
<dbReference type="GO" id="GO:0019899">
    <property type="term" value="F:enzyme binding"/>
    <property type="evidence" value="ECO:0000353"/>
    <property type="project" value="BHF-UCL"/>
</dbReference>
<dbReference type="GO" id="GO:0043295">
    <property type="term" value="F:glutathione binding"/>
    <property type="evidence" value="ECO:0000314"/>
    <property type="project" value="BHF-UCL"/>
</dbReference>
<dbReference type="GO" id="GO:0004364">
    <property type="term" value="F:glutathione transferase activity"/>
    <property type="evidence" value="ECO:0000314"/>
    <property type="project" value="UniProtKB"/>
</dbReference>
<dbReference type="GO" id="GO:0042803">
    <property type="term" value="F:protein homodimerization activity"/>
    <property type="evidence" value="ECO:0000353"/>
    <property type="project" value="BHF-UCL"/>
</dbReference>
<dbReference type="GO" id="GO:0070458">
    <property type="term" value="P:cellular detoxification of nitrogen compound"/>
    <property type="evidence" value="ECO:0000314"/>
    <property type="project" value="BHF-UCL"/>
</dbReference>
<dbReference type="GO" id="GO:1901687">
    <property type="term" value="P:glutathione derivative biosynthetic process"/>
    <property type="evidence" value="ECO:0000314"/>
    <property type="project" value="UniProtKB"/>
</dbReference>
<dbReference type="GO" id="GO:0006749">
    <property type="term" value="P:glutathione metabolic process"/>
    <property type="evidence" value="ECO:0000314"/>
    <property type="project" value="BHF-UCL"/>
</dbReference>
<dbReference type="GO" id="GO:0051122">
    <property type="term" value="P:hepoxilin biosynthetic process"/>
    <property type="evidence" value="ECO:0000314"/>
    <property type="project" value="UniProtKB"/>
</dbReference>
<dbReference type="GO" id="GO:0018916">
    <property type="term" value="P:nitrobenzene metabolic process"/>
    <property type="evidence" value="ECO:0000314"/>
    <property type="project" value="BHF-UCL"/>
</dbReference>
<dbReference type="GO" id="GO:0006693">
    <property type="term" value="P:prostaglandin metabolic process"/>
    <property type="evidence" value="ECO:0000314"/>
    <property type="project" value="UniProtKB"/>
</dbReference>
<dbReference type="GO" id="GO:0042178">
    <property type="term" value="P:xenobiotic catabolic process"/>
    <property type="evidence" value="ECO:0000314"/>
    <property type="project" value="BHF-UCL"/>
</dbReference>
<dbReference type="CDD" id="cd03209">
    <property type="entry name" value="GST_C_Mu"/>
    <property type="match status" value="1"/>
</dbReference>
<dbReference type="CDD" id="cd03075">
    <property type="entry name" value="GST_N_Mu"/>
    <property type="match status" value="1"/>
</dbReference>
<dbReference type="FunFam" id="1.20.1050.10:FF:000083">
    <property type="entry name" value="Glutathione S-transferase Mu 1"/>
    <property type="match status" value="1"/>
</dbReference>
<dbReference type="FunFam" id="3.40.30.10:FF:000603">
    <property type="entry name" value="Glutathione S-transferase Mu 1"/>
    <property type="match status" value="1"/>
</dbReference>
<dbReference type="Gene3D" id="1.20.1050.10">
    <property type="match status" value="1"/>
</dbReference>
<dbReference type="Gene3D" id="3.40.30.10">
    <property type="entry name" value="Glutaredoxin"/>
    <property type="match status" value="1"/>
</dbReference>
<dbReference type="InterPro" id="IPR010987">
    <property type="entry name" value="Glutathione-S-Trfase_C-like"/>
</dbReference>
<dbReference type="InterPro" id="IPR036282">
    <property type="entry name" value="Glutathione-S-Trfase_C_sf"/>
</dbReference>
<dbReference type="InterPro" id="IPR040079">
    <property type="entry name" value="Glutathione_S-Trfase"/>
</dbReference>
<dbReference type="InterPro" id="IPR004045">
    <property type="entry name" value="Glutathione_S-Trfase_N"/>
</dbReference>
<dbReference type="InterPro" id="IPR004046">
    <property type="entry name" value="GST_C"/>
</dbReference>
<dbReference type="InterPro" id="IPR003081">
    <property type="entry name" value="GST_mu"/>
</dbReference>
<dbReference type="InterPro" id="IPR050213">
    <property type="entry name" value="GST_superfamily"/>
</dbReference>
<dbReference type="InterPro" id="IPR036249">
    <property type="entry name" value="Thioredoxin-like_sf"/>
</dbReference>
<dbReference type="PANTHER" id="PTHR11571">
    <property type="entry name" value="GLUTATHIONE S-TRANSFERASE"/>
    <property type="match status" value="1"/>
</dbReference>
<dbReference type="PANTHER" id="PTHR11571:SF247">
    <property type="entry name" value="GLUTATHIONE S-TRANSFERASE MU 1"/>
    <property type="match status" value="1"/>
</dbReference>
<dbReference type="Pfam" id="PF00043">
    <property type="entry name" value="GST_C"/>
    <property type="match status" value="1"/>
</dbReference>
<dbReference type="Pfam" id="PF02798">
    <property type="entry name" value="GST_N"/>
    <property type="match status" value="1"/>
</dbReference>
<dbReference type="PRINTS" id="PR01267">
    <property type="entry name" value="GSTRNSFRASEM"/>
</dbReference>
<dbReference type="SFLD" id="SFLDG01205">
    <property type="entry name" value="AMPS.1"/>
    <property type="match status" value="1"/>
</dbReference>
<dbReference type="SFLD" id="SFLDS00019">
    <property type="entry name" value="Glutathione_Transferase_(cytos"/>
    <property type="match status" value="1"/>
</dbReference>
<dbReference type="SUPFAM" id="SSF47616">
    <property type="entry name" value="GST C-terminal domain-like"/>
    <property type="match status" value="1"/>
</dbReference>
<dbReference type="SUPFAM" id="SSF52833">
    <property type="entry name" value="Thioredoxin-like"/>
    <property type="match status" value="1"/>
</dbReference>
<dbReference type="PROSITE" id="PS50405">
    <property type="entry name" value="GST_CTER"/>
    <property type="match status" value="1"/>
</dbReference>
<dbReference type="PROSITE" id="PS50404">
    <property type="entry name" value="GST_NTER"/>
    <property type="match status" value="1"/>
</dbReference>